<comment type="function">
    <text evidence="1">Aminopeptidase which catalyzes the hydrolysis of amino acid residues from the N-terminus of peptide or protein substrates.</text>
</comment>
<comment type="cofactor">
    <cofactor evidence="1">
        <name>Zn(2+)</name>
        <dbReference type="ChEBI" id="CHEBI:29105"/>
    </cofactor>
    <text evidence="1">Binds 1 zinc ion per subunit.</text>
</comment>
<comment type="subcellular location">
    <subcellularLocation>
        <location evidence="2">Nucleus</location>
        <location evidence="2">Nucleolus</location>
    </subcellularLocation>
</comment>
<comment type="similarity">
    <text evidence="4">Belongs to the peptidase M1 family.</text>
</comment>
<evidence type="ECO:0000250" key="1">
    <source>
        <dbReference type="UniProtKB" id="P15144"/>
    </source>
</evidence>
<evidence type="ECO:0000250" key="2">
    <source>
        <dbReference type="UniProtKB" id="Q8BXQ6"/>
    </source>
</evidence>
<evidence type="ECO:0000255" key="3">
    <source>
        <dbReference type="PROSITE-ProRule" id="PRU10095"/>
    </source>
</evidence>
<evidence type="ECO:0000305" key="4"/>
<dbReference type="EC" id="3.4.11.-" evidence="1"/>
<dbReference type="EMBL" id="AJ810421">
    <property type="protein sequence ID" value="CAH17903.1"/>
    <property type="molecule type" value="mRNA"/>
</dbReference>
<dbReference type="EMBL" id="AABR07072530">
    <property type="status" value="NOT_ANNOTATED_CDS"/>
    <property type="molecule type" value="Genomic_DNA"/>
</dbReference>
<dbReference type="EMBL" id="AABR07026781">
    <property type="status" value="NOT_ANNOTATED_CDS"/>
    <property type="molecule type" value="Genomic_DNA"/>
</dbReference>
<dbReference type="EMBL" id="AABR07026783">
    <property type="status" value="NOT_ANNOTATED_CDS"/>
    <property type="molecule type" value="Genomic_DNA"/>
</dbReference>
<dbReference type="EMBL" id="AABR07026782">
    <property type="status" value="NOT_ANNOTATED_CDS"/>
    <property type="molecule type" value="Genomic_DNA"/>
</dbReference>
<dbReference type="EMBL" id="AABR07026785">
    <property type="status" value="NOT_ANNOTATED_CDS"/>
    <property type="molecule type" value="Genomic_DNA"/>
</dbReference>
<dbReference type="EMBL" id="AABR07026784">
    <property type="status" value="NOT_ANNOTATED_CDS"/>
    <property type="molecule type" value="Genomic_DNA"/>
</dbReference>
<dbReference type="RefSeq" id="NP_001012346.2">
    <property type="nucleotide sequence ID" value="NM_001012346.2"/>
</dbReference>
<dbReference type="RefSeq" id="XP_008769653.1">
    <property type="nucleotide sequence ID" value="XM_008771431.4"/>
</dbReference>
<dbReference type="RefSeq" id="XP_008769654.1">
    <property type="nucleotide sequence ID" value="XM_008771432.4"/>
</dbReference>
<dbReference type="RefSeq" id="XP_017455962.1">
    <property type="nucleotide sequence ID" value="XM_017600473.3"/>
</dbReference>
<dbReference type="RefSeq" id="XP_063132197.1">
    <property type="nucleotide sequence ID" value="XM_063276127.1"/>
</dbReference>
<dbReference type="SMR" id="P69527"/>
<dbReference type="FunCoup" id="P69527">
    <property type="interactions" value="503"/>
</dbReference>
<dbReference type="STRING" id="10116.ENSRNOP00000023638"/>
<dbReference type="MEROPS" id="M01.028"/>
<dbReference type="PhosphoSitePlus" id="P69527"/>
<dbReference type="PaxDb" id="10116-ENSRNOP00000023638"/>
<dbReference type="GeneID" id="290963"/>
<dbReference type="KEGG" id="rno:290963"/>
<dbReference type="UCSC" id="RGD:1309592">
    <property type="organism name" value="rat"/>
</dbReference>
<dbReference type="AGR" id="RGD:1309592"/>
<dbReference type="CTD" id="84909"/>
<dbReference type="RGD" id="1309592">
    <property type="gene designation" value="Aopep"/>
</dbReference>
<dbReference type="VEuPathDB" id="HostDB:ENSRNOG00000017505"/>
<dbReference type="eggNOG" id="KOG1047">
    <property type="taxonomic scope" value="Eukaryota"/>
</dbReference>
<dbReference type="HOGENOM" id="CLU_022467_0_0_1"/>
<dbReference type="InParanoid" id="P69527"/>
<dbReference type="OrthoDB" id="79562at2759"/>
<dbReference type="PhylomeDB" id="P69527"/>
<dbReference type="TreeFam" id="TF332004"/>
<dbReference type="PRO" id="PR:P69527"/>
<dbReference type="Proteomes" id="UP000002494">
    <property type="component" value="Chromosome 17"/>
</dbReference>
<dbReference type="GO" id="GO:0005730">
    <property type="term" value="C:nucleolus"/>
    <property type="evidence" value="ECO:0000250"/>
    <property type="project" value="UniProtKB"/>
</dbReference>
<dbReference type="GO" id="GO:0070006">
    <property type="term" value="F:metalloaminopeptidase activity"/>
    <property type="evidence" value="ECO:0007669"/>
    <property type="project" value="InterPro"/>
</dbReference>
<dbReference type="GO" id="GO:0008270">
    <property type="term" value="F:zinc ion binding"/>
    <property type="evidence" value="ECO:0007669"/>
    <property type="project" value="InterPro"/>
</dbReference>
<dbReference type="GO" id="GO:0006508">
    <property type="term" value="P:proteolysis"/>
    <property type="evidence" value="ECO:0007669"/>
    <property type="project" value="UniProtKB-KW"/>
</dbReference>
<dbReference type="FunFam" id="1.25.40.320:FF:000003">
    <property type="entry name" value="Aminopeptidase O isoform 1"/>
    <property type="match status" value="1"/>
</dbReference>
<dbReference type="FunFam" id="1.10.390.10:FF:000014">
    <property type="entry name" value="aminopeptidase O isoform X1"/>
    <property type="match status" value="1"/>
</dbReference>
<dbReference type="FunFam" id="2.60.40.1730:FF:000008">
    <property type="entry name" value="aminopeptidase O isoform X1"/>
    <property type="match status" value="1"/>
</dbReference>
<dbReference type="FunFam" id="3.30.2010.30:FF:000003">
    <property type="entry name" value="aminopeptidase O isoform X1"/>
    <property type="match status" value="1"/>
</dbReference>
<dbReference type="Gene3D" id="3.30.2010.30">
    <property type="match status" value="1"/>
</dbReference>
<dbReference type="Gene3D" id="1.10.390.10">
    <property type="entry name" value="Neutral Protease Domain 2"/>
    <property type="match status" value="1"/>
</dbReference>
<dbReference type="Gene3D" id="1.25.40.320">
    <property type="entry name" value="Peptidase M1, leukotriene A4 hydrolase/aminopeptidase C-terminal domain"/>
    <property type="match status" value="1"/>
</dbReference>
<dbReference type="Gene3D" id="2.60.40.1730">
    <property type="entry name" value="tricorn interacting facor f3 domain"/>
    <property type="match status" value="1"/>
</dbReference>
<dbReference type="InterPro" id="IPR042097">
    <property type="entry name" value="Aminopeptidase_N-like_N_sf"/>
</dbReference>
<dbReference type="InterPro" id="IPR033577">
    <property type="entry name" value="AOPep"/>
</dbReference>
<dbReference type="InterPro" id="IPR016024">
    <property type="entry name" value="ARM-type_fold"/>
</dbReference>
<dbReference type="InterPro" id="IPR038502">
    <property type="entry name" value="M1_LTA-4_hydro/amino_C_sf"/>
</dbReference>
<dbReference type="InterPro" id="IPR015211">
    <property type="entry name" value="Peptidase_M1_C"/>
</dbReference>
<dbReference type="InterPro" id="IPR014782">
    <property type="entry name" value="Peptidase_M1_dom"/>
</dbReference>
<dbReference type="InterPro" id="IPR027268">
    <property type="entry name" value="Peptidase_M4/M1_CTD_sf"/>
</dbReference>
<dbReference type="PANTHER" id="PTHR46627">
    <property type="entry name" value="AMINOPEPTIDASE O"/>
    <property type="match status" value="1"/>
</dbReference>
<dbReference type="PANTHER" id="PTHR46627:SF1">
    <property type="entry name" value="AMINOPEPTIDASE O"/>
    <property type="match status" value="1"/>
</dbReference>
<dbReference type="Pfam" id="PF09127">
    <property type="entry name" value="Leuk-A4-hydro_C"/>
    <property type="match status" value="1"/>
</dbReference>
<dbReference type="Pfam" id="PF01433">
    <property type="entry name" value="Peptidase_M1"/>
    <property type="match status" value="1"/>
</dbReference>
<dbReference type="SMART" id="SM01263">
    <property type="entry name" value="Leuk-A4-hydro_C"/>
    <property type="match status" value="1"/>
</dbReference>
<dbReference type="SUPFAM" id="SSF48371">
    <property type="entry name" value="ARM repeat"/>
    <property type="match status" value="1"/>
</dbReference>
<dbReference type="SUPFAM" id="SSF63737">
    <property type="entry name" value="Leukotriene A4 hydrolase N-terminal domain"/>
    <property type="match status" value="1"/>
</dbReference>
<dbReference type="SUPFAM" id="SSF55486">
    <property type="entry name" value="Metalloproteases ('zincins'), catalytic domain"/>
    <property type="match status" value="1"/>
</dbReference>
<feature type="chain" id="PRO_0000095093" description="Aminopeptidase O">
    <location>
        <begin position="1"/>
        <end position="822"/>
    </location>
</feature>
<feature type="short sequence motif" description="Nucleolar localization signal" evidence="2">
    <location>
        <begin position="692"/>
        <end position="702"/>
    </location>
</feature>
<feature type="active site" description="Proton acceptor" evidence="1 3">
    <location>
        <position position="481"/>
    </location>
</feature>
<feature type="binding site" evidence="1">
    <location>
        <position position="480"/>
    </location>
    <ligand>
        <name>Zn(2+)</name>
        <dbReference type="ChEBI" id="CHEBI:29105"/>
        <note>catalytic</note>
    </ligand>
</feature>
<feature type="binding site" evidence="1">
    <location>
        <position position="484"/>
    </location>
    <ligand>
        <name>Zn(2+)</name>
        <dbReference type="ChEBI" id="CHEBI:29105"/>
        <note>catalytic</note>
    </ligand>
</feature>
<feature type="binding site" evidence="1">
    <location>
        <position position="503"/>
    </location>
    <ligand>
        <name>Zn(2+)</name>
        <dbReference type="ChEBI" id="CHEBI:29105"/>
        <note>catalytic</note>
    </ligand>
</feature>
<feature type="site" description="Transition state stabilizer" evidence="1">
    <location>
        <position position="587"/>
    </location>
</feature>
<sequence>MDINLDPSRDDLPLMANTSHLLVKHYVLDLDVDFGSRVLEGNIVLFFGDGNRCKKQSSSSQETFQMESEEAYILRTAEPCHVPKMDSNTFSPKMGHREFAVFGKSDQDAFDNDGNHDNKEHDSESSSSKYCCDTGNHGREDFLLVLDCCDLSVLKVEEVDVAAVPDLEKFTKAPNLTAAPEKRRCEIVRDLVALPADAWREQLDCYTRCSQAPGCGELLFDSDKWSLQIRKKGVPTAADFPHAIRIWYKTKPEGQSVTWTSDQDGRPCVYTMGSPINNRALFPCQEPPVAMSTWQATVRAAASFVVLMSGEKSAKPTPLREGYMSWHYYVTMPMPASTFTIAVGCWTEMKPKTSPLDDLTEHTLPLRPSDADFRYGNTCSHMEYPCRFQSASAATQNIIPYRVFAPVCLEGACREALLWLIPSCLSAAHSVLGTHPFSRLDILIVPTNFPSLGMASPHIIFLSQSTLTGTSHLCGTRLCHEIAHAWFGLAIGARDWTEEWLSEGFATHLEDIFWAEAQQLPPHEALEQQELRACLRWHRLQDELQNSPEGMQVLRPNKEKTGHVSASGASVVKNGLNPEKGFMQVHYLKGYFLLRFLARTLGEETYFPFLRKFVHLFHGQLILSQDFLQMLLESIPENKRFGLSVENIVGDWLECPGIPKALQEERKAKDCSPSRLVRQVGSEVAKWIRVNRRPGKRQRRKREAAFEKLSPDQIVLLLEWLLEQKTLSPQTLHRLQQTYHLQEQDAEVRHRWCELVIKHKYTKAYDQVKRFLQEDQAMGIYLYGELMVSEDARLQQLAHRCFELVKGHMDKASAQVVTEMLF</sequence>
<reference key="1">
    <citation type="journal article" date="2004" name="Nature">
        <title>Genome sequence of the Brown Norway rat yields insights into mammalian evolution.</title>
        <authorList>
            <person name="Gibbs R.A."/>
            <person name="Weinstock G.M."/>
            <person name="Metzker M.L."/>
            <person name="Muzny D.M."/>
            <person name="Sodergren E.J."/>
            <person name="Scherer S."/>
            <person name="Scott G."/>
            <person name="Steffen D."/>
            <person name="Worley K.C."/>
            <person name="Burch P.E."/>
            <person name="Okwuonu G."/>
            <person name="Hines S."/>
            <person name="Lewis L."/>
            <person name="Deramo C."/>
            <person name="Delgado O."/>
            <person name="Dugan-Rocha S."/>
            <person name="Miner G."/>
            <person name="Morgan M."/>
            <person name="Hawes A."/>
            <person name="Gill R."/>
            <person name="Holt R.A."/>
            <person name="Adams M.D."/>
            <person name="Amanatides P.G."/>
            <person name="Baden-Tillson H."/>
            <person name="Barnstead M."/>
            <person name="Chin S."/>
            <person name="Evans C.A."/>
            <person name="Ferriera S."/>
            <person name="Fosler C."/>
            <person name="Glodek A."/>
            <person name="Gu Z."/>
            <person name="Jennings D."/>
            <person name="Kraft C.L."/>
            <person name="Nguyen T."/>
            <person name="Pfannkoch C.M."/>
            <person name="Sitter C."/>
            <person name="Sutton G.G."/>
            <person name="Venter J.C."/>
            <person name="Woodage T."/>
            <person name="Smith D."/>
            <person name="Lee H.-M."/>
            <person name="Gustafson E."/>
            <person name="Cahill P."/>
            <person name="Kana A."/>
            <person name="Doucette-Stamm L."/>
            <person name="Weinstock K."/>
            <person name="Fechtel K."/>
            <person name="Weiss R.B."/>
            <person name="Dunn D.M."/>
            <person name="Green E.D."/>
            <person name="Blakesley R.W."/>
            <person name="Bouffard G.G."/>
            <person name="De Jong P.J."/>
            <person name="Osoegawa K."/>
            <person name="Zhu B."/>
            <person name="Marra M."/>
            <person name="Schein J."/>
            <person name="Bosdet I."/>
            <person name="Fjell C."/>
            <person name="Jones S."/>
            <person name="Krzywinski M."/>
            <person name="Mathewson C."/>
            <person name="Siddiqui A."/>
            <person name="Wye N."/>
            <person name="McPherson J."/>
            <person name="Zhao S."/>
            <person name="Fraser C.M."/>
            <person name="Shetty J."/>
            <person name="Shatsman S."/>
            <person name="Geer K."/>
            <person name="Chen Y."/>
            <person name="Abramzon S."/>
            <person name="Nierman W.C."/>
            <person name="Havlak P.H."/>
            <person name="Chen R."/>
            <person name="Durbin K.J."/>
            <person name="Egan A."/>
            <person name="Ren Y."/>
            <person name="Song X.-Z."/>
            <person name="Li B."/>
            <person name="Liu Y."/>
            <person name="Qin X."/>
            <person name="Cawley S."/>
            <person name="Cooney A.J."/>
            <person name="D'Souza L.M."/>
            <person name="Martin K."/>
            <person name="Wu J.Q."/>
            <person name="Gonzalez-Garay M.L."/>
            <person name="Jackson A.R."/>
            <person name="Kalafus K.J."/>
            <person name="McLeod M.P."/>
            <person name="Milosavljevic A."/>
            <person name="Virk D."/>
            <person name="Volkov A."/>
            <person name="Wheeler D.A."/>
            <person name="Zhang Z."/>
            <person name="Bailey J.A."/>
            <person name="Eichler E.E."/>
            <person name="Tuzun E."/>
            <person name="Birney E."/>
            <person name="Mongin E."/>
            <person name="Ureta-Vidal A."/>
            <person name="Woodwark C."/>
            <person name="Zdobnov E."/>
            <person name="Bork P."/>
            <person name="Suyama M."/>
            <person name="Torrents D."/>
            <person name="Alexandersson M."/>
            <person name="Trask B.J."/>
            <person name="Young J.M."/>
            <person name="Huang H."/>
            <person name="Wang H."/>
            <person name="Xing H."/>
            <person name="Daniels S."/>
            <person name="Gietzen D."/>
            <person name="Schmidt J."/>
            <person name="Stevens K."/>
            <person name="Vitt U."/>
            <person name="Wingrove J."/>
            <person name="Camara F."/>
            <person name="Mar Alba M."/>
            <person name="Abril J.F."/>
            <person name="Guigo R."/>
            <person name="Smit A."/>
            <person name="Dubchak I."/>
            <person name="Rubin E.M."/>
            <person name="Couronne O."/>
            <person name="Poliakov A."/>
            <person name="Huebner N."/>
            <person name="Ganten D."/>
            <person name="Goesele C."/>
            <person name="Hummel O."/>
            <person name="Kreitler T."/>
            <person name="Lee Y.-A."/>
            <person name="Monti J."/>
            <person name="Schulz H."/>
            <person name="Zimdahl H."/>
            <person name="Himmelbauer H."/>
            <person name="Lehrach H."/>
            <person name="Jacob H.J."/>
            <person name="Bromberg S."/>
            <person name="Gullings-Handley J."/>
            <person name="Jensen-Seaman M.I."/>
            <person name="Kwitek A.E."/>
            <person name="Lazar J."/>
            <person name="Pasko D."/>
            <person name="Tonellato P.J."/>
            <person name="Twigger S."/>
            <person name="Ponting C.P."/>
            <person name="Duarte J.M."/>
            <person name="Rice S."/>
            <person name="Goodstadt L."/>
            <person name="Beatson S.A."/>
            <person name="Emes R.D."/>
            <person name="Winter E.E."/>
            <person name="Webber C."/>
            <person name="Brandt P."/>
            <person name="Nyakatura G."/>
            <person name="Adetobi M."/>
            <person name="Chiaromonte F."/>
            <person name="Elnitski L."/>
            <person name="Eswara P."/>
            <person name="Hardison R.C."/>
            <person name="Hou M."/>
            <person name="Kolbe D."/>
            <person name="Makova K."/>
            <person name="Miller W."/>
            <person name="Nekrutenko A."/>
            <person name="Riemer C."/>
            <person name="Schwartz S."/>
            <person name="Taylor J."/>
            <person name="Yang S."/>
            <person name="Zhang Y."/>
            <person name="Lindpaintner K."/>
            <person name="Andrews T.D."/>
            <person name="Caccamo M."/>
            <person name="Clamp M."/>
            <person name="Clarke L."/>
            <person name="Curwen V."/>
            <person name="Durbin R.M."/>
            <person name="Eyras E."/>
            <person name="Searle S.M."/>
            <person name="Cooper G.M."/>
            <person name="Batzoglou S."/>
            <person name="Brudno M."/>
            <person name="Sidow A."/>
            <person name="Stone E.A."/>
            <person name="Payseur B.A."/>
            <person name="Bourque G."/>
            <person name="Lopez-Otin C."/>
            <person name="Puente X.S."/>
            <person name="Chakrabarti K."/>
            <person name="Chatterji S."/>
            <person name="Dewey C."/>
            <person name="Pachter L."/>
            <person name="Bray N."/>
            <person name="Yap V.B."/>
            <person name="Caspi A."/>
            <person name="Tesler G."/>
            <person name="Pevzner P.A."/>
            <person name="Haussler D."/>
            <person name="Roskin K.M."/>
            <person name="Baertsch R."/>
            <person name="Clawson H."/>
            <person name="Furey T.S."/>
            <person name="Hinrichs A.S."/>
            <person name="Karolchik D."/>
            <person name="Kent W.J."/>
            <person name="Rosenbloom K.R."/>
            <person name="Trumbower H."/>
            <person name="Weirauch M."/>
            <person name="Cooper D.N."/>
            <person name="Stenson P.D."/>
            <person name="Ma B."/>
            <person name="Brent M."/>
            <person name="Arumugam M."/>
            <person name="Shteynberg D."/>
            <person name="Copley R.R."/>
            <person name="Taylor M.S."/>
            <person name="Riethman H."/>
            <person name="Mudunuri U."/>
            <person name="Peterson J."/>
            <person name="Guyer M."/>
            <person name="Felsenfeld A."/>
            <person name="Old S."/>
            <person name="Mockrin S."/>
            <person name="Collins F.S."/>
        </authorList>
    </citation>
    <scope>NUCLEOTIDE SEQUENCE [LARGE SCALE GENOMIC DNA]</scope>
    <source>
        <strain>Brown Norway</strain>
    </source>
</reference>
<gene>
    <name type="primary">Aopep</name>
    <name type="synonym">Onpep</name>
</gene>
<organism>
    <name type="scientific">Rattus norvegicus</name>
    <name type="common">Rat</name>
    <dbReference type="NCBI Taxonomy" id="10116"/>
    <lineage>
        <taxon>Eukaryota</taxon>
        <taxon>Metazoa</taxon>
        <taxon>Chordata</taxon>
        <taxon>Craniata</taxon>
        <taxon>Vertebrata</taxon>
        <taxon>Euteleostomi</taxon>
        <taxon>Mammalia</taxon>
        <taxon>Eutheria</taxon>
        <taxon>Euarchontoglires</taxon>
        <taxon>Glires</taxon>
        <taxon>Rodentia</taxon>
        <taxon>Myomorpha</taxon>
        <taxon>Muroidea</taxon>
        <taxon>Muridae</taxon>
        <taxon>Murinae</taxon>
        <taxon>Rattus</taxon>
    </lineage>
</organism>
<accession>P69527</accession>
<accession>F1LRV1</accession>
<proteinExistence type="evidence at transcript level"/>
<keyword id="KW-0031">Aminopeptidase</keyword>
<keyword id="KW-0378">Hydrolase</keyword>
<keyword id="KW-0479">Metal-binding</keyword>
<keyword id="KW-0482">Metalloprotease</keyword>
<keyword id="KW-0539">Nucleus</keyword>
<keyword id="KW-0645">Protease</keyword>
<keyword id="KW-1185">Reference proteome</keyword>
<keyword id="KW-0862">Zinc</keyword>
<name>AMPO_RAT</name>
<protein>
    <recommendedName>
        <fullName>Aminopeptidase O</fullName>
        <shortName>AP-O</shortName>
        <ecNumber evidence="1">3.4.11.-</ecNumber>
    </recommendedName>
</protein>